<dbReference type="EMBL" id="GG662700">
    <property type="protein sequence ID" value="EAR95929.1"/>
    <property type="molecule type" value="Genomic_DNA"/>
</dbReference>
<dbReference type="RefSeq" id="XP_001016174.1">
    <property type="nucleotide sequence ID" value="XM_001016174.1"/>
</dbReference>
<dbReference type="SMR" id="Q23H79"/>
<dbReference type="STRING" id="312017.Q23H79"/>
<dbReference type="EnsemblProtists" id="EAR95929">
    <property type="protein sequence ID" value="EAR95929"/>
    <property type="gene ID" value="TTHERM_00820660"/>
</dbReference>
<dbReference type="GeneID" id="7838391"/>
<dbReference type="KEGG" id="tet:TTHERM_00820660"/>
<dbReference type="eggNOG" id="ENOG502QTGJ">
    <property type="taxonomic scope" value="Eukaryota"/>
</dbReference>
<dbReference type="HOGENOM" id="CLU_030061_0_0_1"/>
<dbReference type="InParanoid" id="Q23H79"/>
<dbReference type="OMA" id="QLMELMC"/>
<dbReference type="OrthoDB" id="10251073at2759"/>
<dbReference type="Proteomes" id="UP000009168">
    <property type="component" value="Unassembled WGS sequence"/>
</dbReference>
<dbReference type="GO" id="GO:0036064">
    <property type="term" value="C:ciliary basal body"/>
    <property type="evidence" value="ECO:0007669"/>
    <property type="project" value="TreeGrafter"/>
</dbReference>
<dbReference type="GO" id="GO:0031514">
    <property type="term" value="C:motile cilium"/>
    <property type="evidence" value="ECO:0000314"/>
    <property type="project" value="UniProtKB"/>
</dbReference>
<dbReference type="GO" id="GO:0001534">
    <property type="term" value="C:radial spoke"/>
    <property type="evidence" value="ECO:0000314"/>
    <property type="project" value="UniProtKB"/>
</dbReference>
<dbReference type="GO" id="GO:0035082">
    <property type="term" value="P:axoneme assembly"/>
    <property type="evidence" value="ECO:0000315"/>
    <property type="project" value="UniProtKB"/>
</dbReference>
<dbReference type="GO" id="GO:0048870">
    <property type="term" value="P:cell motility"/>
    <property type="evidence" value="ECO:0000315"/>
    <property type="project" value="UniProtKB"/>
</dbReference>
<dbReference type="GO" id="GO:0003341">
    <property type="term" value="P:cilium movement"/>
    <property type="evidence" value="ECO:0000315"/>
    <property type="project" value="UniProtKB"/>
</dbReference>
<dbReference type="GO" id="GO:0003356">
    <property type="term" value="P:regulation of cilium beat frequency"/>
    <property type="evidence" value="ECO:0007669"/>
    <property type="project" value="TreeGrafter"/>
</dbReference>
<dbReference type="InterPro" id="IPR021897">
    <property type="entry name" value="FAP206"/>
</dbReference>
<dbReference type="PANTHER" id="PTHR21442">
    <property type="entry name" value="CILIA- AND FLAGELLA-ASSOCIATED PROTEIN 206"/>
    <property type="match status" value="1"/>
</dbReference>
<dbReference type="PANTHER" id="PTHR21442:SF0">
    <property type="entry name" value="CILIA- AND FLAGELLA-ASSOCIATED PROTEIN 206"/>
    <property type="match status" value="1"/>
</dbReference>
<dbReference type="Pfam" id="PF12018">
    <property type="entry name" value="FAP206"/>
    <property type="match status" value="1"/>
</dbReference>
<proteinExistence type="inferred from homology"/>
<organism>
    <name type="scientific">Tetrahymena thermophila (strain SB210)</name>
    <dbReference type="NCBI Taxonomy" id="312017"/>
    <lineage>
        <taxon>Eukaryota</taxon>
        <taxon>Sar</taxon>
        <taxon>Alveolata</taxon>
        <taxon>Ciliophora</taxon>
        <taxon>Intramacronucleata</taxon>
        <taxon>Oligohymenophorea</taxon>
        <taxon>Hymenostomatida</taxon>
        <taxon>Tetrahymenina</taxon>
        <taxon>Tetrahymenidae</taxon>
        <taxon>Tetrahymena</taxon>
    </lineage>
</organism>
<evidence type="ECO:0000250" key="1">
    <source>
        <dbReference type="UniProtKB" id="Q8IYR0"/>
    </source>
</evidence>
<evidence type="ECO:0000269" key="2">
    <source>
    </source>
</evidence>
<evidence type="ECO:0000303" key="3">
    <source>
    </source>
</evidence>
<evidence type="ECO:0000305" key="4"/>
<evidence type="ECO:0000312" key="5">
    <source>
        <dbReference type="EMBL" id="EAR95929.1"/>
    </source>
</evidence>
<sequence>MNQLEEIVKYVIYKCRENNHPVTETLAAFVTQTIYNPKTDRFYLEDKLTASQVDELKATVLQKLSQIDKPNMKTIQMQISYDSAYIESEIQRQERIKNQSIETGKLTDEVVSLEIKNAKDFEGLTVLFKKIFNFLLYKNKELMYDGTNKTGNQDSENQATQFNIEKEVAAGLESVIPRAALGPFVSLNPSEKVTQLVELSNLVIGIRLFNKWIQKGGIGLVPFQDLLEYEGRDLIERIRQEAFEVIENCDNYTIFFQNVGPGKIKISDEQFKQYKDELTFLRQYLSYILSIQEDVDISENSVDSNQTRYLKEIKDLETLLKQKSSAPKEQVYPKFATLAQAYIQLLEEKKLCLTRVKLFELLQEMRKGFKLTLPRNLILTAKNISQDPSNEEQVEIEYSEDCGIERLLPKNTPDFMQTPLDYLGFCLWSIVKRDGLLLPGKPALGVFRYKDKNCVFSDEKSINEFLSDPQQFIQGVINQCRKNPELIHLLRMDDSFKNVNLNIYVSGQEGGHQLSNKLMVDKGIETPLHFVEKRLDPNYCWNEWELRKKALQMANIRKRQTKACQTILSNFKVDSEAQTYLPKDNETNTGKTEWDIRKFAIEQAKKKGIIAGTDRAPYPIHPRNYITGLRDKDTN</sequence>
<comment type="function">
    <text evidence="2">May regulate cilium motility through its role in the assembly of the axonemal RS2 radial spoke.</text>
</comment>
<comment type="subcellular location">
    <subcellularLocation>
        <location evidence="2">Cytoplasm</location>
        <location evidence="2">Cytoskeleton</location>
        <location evidence="2">Cilium axoneme</location>
    </subcellularLocation>
</comment>
<comment type="disruption phenotype">
    <text evidence="2">The mobility of cells lacking CFAP206 is decreased. If their number is normal, cilia are slightly longer and display uncoordinated motility with abnormal waveform characterized by decreased bend amplitude and decreased metachronal coordination. Cilia axonemes display a classical 9+2 organization of microtubules but their shape is abnormal.</text>
</comment>
<comment type="similarity">
    <text evidence="4">Belongs to the CFAP206 family.</text>
</comment>
<accession>Q23H79</accession>
<protein>
    <recommendedName>
        <fullName evidence="4">Cilia- and flagella-associated protein 206</fullName>
    </recommendedName>
    <alternativeName>
        <fullName evidence="3">Flagella-associated protein 206</fullName>
    </alternativeName>
</protein>
<name>CF206_TETTS</name>
<gene>
    <name evidence="1" type="primary">CFAP206</name>
    <name evidence="3" type="synonym">FAP206</name>
    <name evidence="5" type="ORF">TTHERM_00820660</name>
</gene>
<reference key="1">
    <citation type="journal article" date="2006" name="PLoS Biol.">
        <title>Macronuclear genome sequence of the ciliate Tetrahymena thermophila, a model eukaryote.</title>
        <authorList>
            <person name="Eisen J.A."/>
            <person name="Coyne R.S."/>
            <person name="Wu M."/>
            <person name="Wu D."/>
            <person name="Thiagarajan M."/>
            <person name="Wortman J.R."/>
            <person name="Badger J.H."/>
            <person name="Ren Q."/>
            <person name="Amedeo P."/>
            <person name="Jones K.M."/>
            <person name="Tallon L.J."/>
            <person name="Delcher A.L."/>
            <person name="Salzberg S.L."/>
            <person name="Silva J.C."/>
            <person name="Haas B.J."/>
            <person name="Majoros W.H."/>
            <person name="Farzad M."/>
            <person name="Carlton J.M."/>
            <person name="Smith R.K. Jr."/>
            <person name="Garg J."/>
            <person name="Pearlman R.E."/>
            <person name="Karrer K.M."/>
            <person name="Sun L."/>
            <person name="Manning G."/>
            <person name="Elde N.C."/>
            <person name="Turkewitz A.P."/>
            <person name="Asai D.J."/>
            <person name="Wilkes D.E."/>
            <person name="Wang Y."/>
            <person name="Cai H."/>
            <person name="Collins K."/>
            <person name="Stewart B.A."/>
            <person name="Lee S.R."/>
            <person name="Wilamowska K."/>
            <person name="Weinberg Z."/>
            <person name="Ruzzo W.L."/>
            <person name="Wloga D."/>
            <person name="Gaertig J."/>
            <person name="Frankel J."/>
            <person name="Tsao C.-C."/>
            <person name="Gorovsky M.A."/>
            <person name="Keeling P.J."/>
            <person name="Waller R.F."/>
            <person name="Patron N.J."/>
            <person name="Cherry J.M."/>
            <person name="Stover N.A."/>
            <person name="Krieger C.J."/>
            <person name="del Toro C."/>
            <person name="Ryder H.F."/>
            <person name="Williamson S.C."/>
            <person name="Barbeau R.A."/>
            <person name="Hamilton E.P."/>
            <person name="Orias E."/>
        </authorList>
    </citation>
    <scope>NUCLEOTIDE SEQUENCE [LARGE SCALE GENOMIC DNA]</scope>
    <source>
        <strain>SB210</strain>
    </source>
</reference>
<reference key="2">
    <citation type="journal article" date="2015" name="Mol. Biol. Cell">
        <title>FAP206 is a microtubule-docking adapter for ciliary radial spoke 2 and dynein c.</title>
        <authorList>
            <person name="Vasudevan K.K."/>
            <person name="Song K."/>
            <person name="Alford L.M."/>
            <person name="Sale W.S."/>
            <person name="Dymek E.E."/>
            <person name="Smith E.F."/>
            <person name="Hennessey T."/>
            <person name="Joachimiak E."/>
            <person name="Urbanska P."/>
            <person name="Wloga D."/>
            <person name="Dentler W."/>
            <person name="Nicastro D."/>
            <person name="Gaertig J."/>
        </authorList>
    </citation>
    <scope>FUNCTION</scope>
    <scope>SUBCELLULAR LOCATION</scope>
    <scope>DISRUPTION PHENOTYPE</scope>
</reference>
<keyword id="KW-0966">Cell projection</keyword>
<keyword id="KW-0969">Cilium</keyword>
<keyword id="KW-0970">Cilium biogenesis/degradation</keyword>
<keyword id="KW-0963">Cytoplasm</keyword>
<keyword id="KW-0206">Cytoskeleton</keyword>
<keyword id="KW-1185">Reference proteome</keyword>
<feature type="chain" id="PRO_0000437483" description="Cilia- and flagella-associated protein 206">
    <location>
        <begin position="1"/>
        <end position="635"/>
    </location>
</feature>